<keyword id="KW-0963">Cytoplasm</keyword>
<keyword id="KW-0378">Hydrolase</keyword>
<keyword id="KW-0391">Immunity</keyword>
<keyword id="KW-0539">Nucleus</keyword>
<keyword id="KW-0645">Protease</keyword>
<keyword id="KW-0647">Proteasome</keyword>
<keyword id="KW-0888">Threonine protease</keyword>
<keyword id="KW-0865">Zymogen</keyword>
<proteinExistence type="evidence at transcript level"/>
<reference key="1">
    <citation type="journal article" date="1999" name="J. Immunol.">
        <title>Expression, linkage, and polymorphism of MHC-related genes in rainbow trout, Oncorhynchus mykiss.</title>
        <authorList>
            <person name="Hansen J.D."/>
            <person name="Strassburger P."/>
            <person name="Thorgaard G.H."/>
            <person name="Young W.P."/>
            <person name="Du Pasquier L."/>
        </authorList>
    </citation>
    <scope>NUCLEOTIDE SEQUENCE [MRNA]</scope>
    <source>
        <strain>Shasta</strain>
        <tissue>Thymocyte</tissue>
    </source>
</reference>
<dbReference type="EC" id="3.4.25.1"/>
<dbReference type="EMBL" id="AF115541">
    <property type="protein sequence ID" value="AAD53038.1"/>
    <property type="molecule type" value="mRNA"/>
</dbReference>
<dbReference type="SMR" id="Q9PT26"/>
<dbReference type="MEROPS" id="T01.013"/>
<dbReference type="Proteomes" id="UP000694395">
    <property type="component" value="Unplaced"/>
</dbReference>
<dbReference type="GO" id="GO:0005737">
    <property type="term" value="C:cytoplasm"/>
    <property type="evidence" value="ECO:0007669"/>
    <property type="project" value="UniProtKB-SubCell"/>
</dbReference>
<dbReference type="GO" id="GO:0005634">
    <property type="term" value="C:nucleus"/>
    <property type="evidence" value="ECO:0007669"/>
    <property type="project" value="UniProtKB-SubCell"/>
</dbReference>
<dbReference type="GO" id="GO:0019774">
    <property type="term" value="C:proteasome core complex, beta-subunit complex"/>
    <property type="evidence" value="ECO:0000250"/>
    <property type="project" value="UniProtKB"/>
</dbReference>
<dbReference type="GO" id="GO:0004298">
    <property type="term" value="F:threonine-type endopeptidase activity"/>
    <property type="evidence" value="ECO:0007669"/>
    <property type="project" value="UniProtKB-KW"/>
</dbReference>
<dbReference type="GO" id="GO:0002376">
    <property type="term" value="P:immune system process"/>
    <property type="evidence" value="ECO:0007669"/>
    <property type="project" value="UniProtKB-KW"/>
</dbReference>
<dbReference type="GO" id="GO:0051603">
    <property type="term" value="P:proteolysis involved in protein catabolic process"/>
    <property type="evidence" value="ECO:0007669"/>
    <property type="project" value="InterPro"/>
</dbReference>
<dbReference type="CDD" id="cd03762">
    <property type="entry name" value="proteasome_beta_type_6"/>
    <property type="match status" value="1"/>
</dbReference>
<dbReference type="FunFam" id="3.60.20.10:FF:000010">
    <property type="entry name" value="Proteasome subunit beta type-1"/>
    <property type="match status" value="1"/>
</dbReference>
<dbReference type="Gene3D" id="3.60.20.10">
    <property type="entry name" value="Glutamine Phosphoribosylpyrophosphate, subunit 1, domain 1"/>
    <property type="match status" value="1"/>
</dbReference>
<dbReference type="InterPro" id="IPR029055">
    <property type="entry name" value="Ntn_hydrolases_N"/>
</dbReference>
<dbReference type="InterPro" id="IPR000243">
    <property type="entry name" value="Pept_T1A_subB"/>
</dbReference>
<dbReference type="InterPro" id="IPR016050">
    <property type="entry name" value="Proteasome_bsu_CS"/>
</dbReference>
<dbReference type="InterPro" id="IPR001353">
    <property type="entry name" value="Proteasome_sua/b"/>
</dbReference>
<dbReference type="InterPro" id="IPR023333">
    <property type="entry name" value="Proteasome_suB-type"/>
</dbReference>
<dbReference type="PANTHER" id="PTHR32194">
    <property type="entry name" value="METALLOPROTEASE TLDD"/>
    <property type="match status" value="1"/>
</dbReference>
<dbReference type="PANTHER" id="PTHR32194:SF12">
    <property type="entry name" value="PROTEASOME SUBUNIT BETA"/>
    <property type="match status" value="1"/>
</dbReference>
<dbReference type="Pfam" id="PF00227">
    <property type="entry name" value="Proteasome"/>
    <property type="match status" value="1"/>
</dbReference>
<dbReference type="PRINTS" id="PR00141">
    <property type="entry name" value="PROTEASOME"/>
</dbReference>
<dbReference type="SUPFAM" id="SSF56235">
    <property type="entry name" value="N-terminal nucleophile aminohydrolases (Ntn hydrolases)"/>
    <property type="match status" value="1"/>
</dbReference>
<dbReference type="PROSITE" id="PS00854">
    <property type="entry name" value="PROTEASOME_BETA_1"/>
    <property type="match status" value="1"/>
</dbReference>
<dbReference type="PROSITE" id="PS51476">
    <property type="entry name" value="PROTEASOME_BETA_2"/>
    <property type="match status" value="1"/>
</dbReference>
<gene>
    <name type="primary">psmb9</name>
    <name type="synonym">lmp2</name>
</gene>
<comment type="function">
    <text evidence="1">The proteasome is a multicatalytic proteinase complex which is characterized by its ability to cleave peptides with Arg, Phe, Tyr, Leu, and Glu adjacent to the leaving group at neutral or slightly basic pH. The proteasome has an ATP-dependent proteolytic activity. This subunit is involved in antigen processing to generate class I binding peptides (By similarity).</text>
</comment>
<comment type="catalytic activity">
    <reaction>
        <text>Cleavage of peptide bonds with very broad specificity.</text>
        <dbReference type="EC" id="3.4.25.1"/>
    </reaction>
</comment>
<comment type="subunit">
    <text evidence="1">The 26S proteasome consists of a 20S proteasome core and two 19S regulatory subunits. The 20S proteasome core is composed of 28 subunits that are arranged in four stacked rings, resulting in a barrel-shaped structure. The two end rings are each formed by seven alpha subunits, and the two central rings are each formed by seven beta subunits. The catalytic chamber with the active sites is on the inside of the barrel. Component of the immunoproteasome, where it displaces the equivalent housekeeping subunit PSMB6 (By similarity).</text>
</comment>
<comment type="subcellular location">
    <subcellularLocation>
        <location evidence="3">Cytoplasm</location>
    </subcellularLocation>
    <subcellularLocation>
        <location evidence="1">Nucleus</location>
    </subcellularLocation>
</comment>
<comment type="PTM">
    <text evidence="2">Autocleaved. The resulting N-terminal Thr residue of the mature subunit is responsible for the nucleophile proteolytic activity.</text>
</comment>
<comment type="similarity">
    <text evidence="3">Belongs to the peptidase T1B family.</text>
</comment>
<organism>
    <name type="scientific">Oncorhynchus mykiss</name>
    <name type="common">Rainbow trout</name>
    <name type="synonym">Salmo gairdneri</name>
    <dbReference type="NCBI Taxonomy" id="8022"/>
    <lineage>
        <taxon>Eukaryota</taxon>
        <taxon>Metazoa</taxon>
        <taxon>Chordata</taxon>
        <taxon>Craniata</taxon>
        <taxon>Vertebrata</taxon>
        <taxon>Euteleostomi</taxon>
        <taxon>Actinopterygii</taxon>
        <taxon>Neopterygii</taxon>
        <taxon>Teleostei</taxon>
        <taxon>Protacanthopterygii</taxon>
        <taxon>Salmoniformes</taxon>
        <taxon>Salmonidae</taxon>
        <taxon>Salmoninae</taxon>
        <taxon>Oncorhynchus</taxon>
    </lineage>
</organism>
<name>PSB9_ONCMY</name>
<protein>
    <recommendedName>
        <fullName>Proteasome subunit beta type-9</fullName>
        <ecNumber>3.4.25.1</ecNumber>
    </recommendedName>
    <alternativeName>
        <fullName>Low molecular mass protein 2</fullName>
    </alternativeName>
</protein>
<evidence type="ECO:0000250" key="1"/>
<evidence type="ECO:0000250" key="2">
    <source>
        <dbReference type="UniProtKB" id="O35955"/>
    </source>
</evidence>
<evidence type="ECO:0000255" key="3">
    <source>
        <dbReference type="PROSITE-ProRule" id="PRU00809"/>
    </source>
</evidence>
<feature type="propeptide" id="PRO_0000026635" description="Removed in mature form" evidence="1">
    <location>
        <begin position="1"/>
        <end position="18"/>
    </location>
</feature>
<feature type="chain" id="PRO_0000026636" description="Proteasome subunit beta type-9">
    <location>
        <begin position="19"/>
        <end position="217"/>
    </location>
</feature>
<feature type="active site" description="Nucleophile" evidence="1">
    <location>
        <position position="19"/>
    </location>
</feature>
<feature type="site" description="Cleavage; by autolysis" evidence="2">
    <location>
        <begin position="18"/>
        <end position="19"/>
    </location>
</feature>
<accession>Q9PT26</accession>
<sequence length="217" mass="23406">MLDESLEPGWLSEEVKTGTTIIAIEFDGGVVLGSDSRVSAGETVVNRVMNKLSLLHDKIYCALSGSAADAQTIAEMVNYQLDVHSIEVGEDPQVRSAATLVKNISYKYKEDLSAHLIVAGWDKRGGGQVYVTLNGLLSRQPFAVGGSGSSYVYGFVDAEYRKAMSKEDCQQFVVNTLSLAMSRDGSSGGVAYLVTIDEKGAEEKCILGNELPTFYDQ</sequence>